<name>MRAY_NAUPA</name>
<feature type="chain" id="PRO_1000117189" description="Phospho-N-acetylmuramoyl-pentapeptide-transferase">
    <location>
        <begin position="1"/>
        <end position="351"/>
    </location>
</feature>
<feature type="transmembrane region" description="Helical" evidence="1">
    <location>
        <begin position="22"/>
        <end position="42"/>
    </location>
</feature>
<feature type="transmembrane region" description="Helical" evidence="1">
    <location>
        <begin position="65"/>
        <end position="85"/>
    </location>
</feature>
<feature type="transmembrane region" description="Helical" evidence="1">
    <location>
        <begin position="87"/>
        <end position="107"/>
    </location>
</feature>
<feature type="transmembrane region" description="Helical" evidence="1">
    <location>
        <begin position="128"/>
        <end position="148"/>
    </location>
</feature>
<feature type="transmembrane region" description="Helical" evidence="1">
    <location>
        <begin position="158"/>
        <end position="178"/>
    </location>
</feature>
<feature type="transmembrane region" description="Helical" evidence="1">
    <location>
        <begin position="190"/>
        <end position="210"/>
    </location>
</feature>
<feature type="transmembrane region" description="Helical" evidence="1">
    <location>
        <begin position="225"/>
        <end position="245"/>
    </location>
</feature>
<feature type="transmembrane region" description="Helical" evidence="1">
    <location>
        <begin position="254"/>
        <end position="274"/>
    </location>
</feature>
<feature type="transmembrane region" description="Helical" evidence="1">
    <location>
        <begin position="279"/>
        <end position="299"/>
    </location>
</feature>
<feature type="transmembrane region" description="Helical" evidence="1">
    <location>
        <begin position="328"/>
        <end position="348"/>
    </location>
</feature>
<protein>
    <recommendedName>
        <fullName evidence="1">Phospho-N-acetylmuramoyl-pentapeptide-transferase</fullName>
        <ecNumber evidence="1">2.7.8.13</ecNumber>
    </recommendedName>
    <alternativeName>
        <fullName evidence="1">UDP-MurNAc-pentapeptide phosphotransferase</fullName>
    </alternativeName>
</protein>
<organism>
    <name type="scientific">Nautilia profundicola (strain ATCC BAA-1463 / DSM 18972 / AmH)</name>
    <dbReference type="NCBI Taxonomy" id="598659"/>
    <lineage>
        <taxon>Bacteria</taxon>
        <taxon>Pseudomonadati</taxon>
        <taxon>Campylobacterota</taxon>
        <taxon>Epsilonproteobacteria</taxon>
        <taxon>Nautiliales</taxon>
        <taxon>Nautiliaceae</taxon>
        <taxon>Nautilia</taxon>
    </lineage>
</organism>
<comment type="function">
    <text evidence="1">Catalyzes the initial step of the lipid cycle reactions in the biosynthesis of the cell wall peptidoglycan: transfers peptidoglycan precursor phospho-MurNAc-pentapeptide from UDP-MurNAc-pentapeptide onto the lipid carrier undecaprenyl phosphate, yielding undecaprenyl-pyrophosphoryl-MurNAc-pentapeptide, known as lipid I.</text>
</comment>
<comment type="catalytic activity">
    <reaction evidence="1">
        <text>UDP-N-acetyl-alpha-D-muramoyl-L-alanyl-gamma-D-glutamyl-meso-2,6-diaminopimeloyl-D-alanyl-D-alanine + di-trans,octa-cis-undecaprenyl phosphate = di-trans,octa-cis-undecaprenyl diphospho-N-acetyl-alpha-D-muramoyl-L-alanyl-D-glutamyl-meso-2,6-diaminopimeloyl-D-alanyl-D-alanine + UMP</text>
        <dbReference type="Rhea" id="RHEA:28386"/>
        <dbReference type="ChEBI" id="CHEBI:57865"/>
        <dbReference type="ChEBI" id="CHEBI:60392"/>
        <dbReference type="ChEBI" id="CHEBI:61386"/>
        <dbReference type="ChEBI" id="CHEBI:61387"/>
        <dbReference type="EC" id="2.7.8.13"/>
    </reaction>
</comment>
<comment type="cofactor">
    <cofactor evidence="1">
        <name>Mg(2+)</name>
        <dbReference type="ChEBI" id="CHEBI:18420"/>
    </cofactor>
</comment>
<comment type="pathway">
    <text evidence="1">Cell wall biogenesis; peptidoglycan biosynthesis.</text>
</comment>
<comment type="subcellular location">
    <subcellularLocation>
        <location evidence="1">Cell inner membrane</location>
        <topology evidence="1">Multi-pass membrane protein</topology>
    </subcellularLocation>
</comment>
<comment type="similarity">
    <text evidence="1">Belongs to the glycosyltransferase 4 family. MraY subfamily.</text>
</comment>
<evidence type="ECO:0000255" key="1">
    <source>
        <dbReference type="HAMAP-Rule" id="MF_00038"/>
    </source>
</evidence>
<sequence>MLYYLYEHFHINIFHYITFRAILAFFLSFFITIFIMPKFISWAKAKATQPIFELAPDNHKTKNSTPTMGGLIYITSAVISILITTEFNKYVLLTLLLLVYFTYLGFIDDYGKIKGSSNKAGLSAKTKFLLQWVGALVISYLLIKVGFDTKLYVPFYKYPIFDMGYYAVIFWAFIIVAMSNAVNLTDGLDGLATVPSIFSLFTLGILLYIVGNYKFSSYLFYPFELGVGELTIIVFALIGALLGFLWYNANPAEVFMGDSGSLPLGAVIGFLAIVAKSELLLIFIAFVFIMETVSVILQVGSYKTRGKRVFKMAPIHHHFEMLGWKENKITIRFWIMALITNLIAILSIKIR</sequence>
<dbReference type="EC" id="2.7.8.13" evidence="1"/>
<dbReference type="EMBL" id="CP001279">
    <property type="protein sequence ID" value="ACM92857.1"/>
    <property type="molecule type" value="Genomic_DNA"/>
</dbReference>
<dbReference type="RefSeq" id="WP_015901909.1">
    <property type="nucleotide sequence ID" value="NC_012115.1"/>
</dbReference>
<dbReference type="SMR" id="B9L7V6"/>
<dbReference type="STRING" id="598659.NAMH_0291"/>
<dbReference type="KEGG" id="nam:NAMH_0291"/>
<dbReference type="eggNOG" id="COG0472">
    <property type="taxonomic scope" value="Bacteria"/>
</dbReference>
<dbReference type="HOGENOM" id="CLU_023982_0_0_7"/>
<dbReference type="OrthoDB" id="9805475at2"/>
<dbReference type="UniPathway" id="UPA00219"/>
<dbReference type="Proteomes" id="UP000000448">
    <property type="component" value="Chromosome"/>
</dbReference>
<dbReference type="GO" id="GO:0005886">
    <property type="term" value="C:plasma membrane"/>
    <property type="evidence" value="ECO:0007669"/>
    <property type="project" value="UniProtKB-SubCell"/>
</dbReference>
<dbReference type="GO" id="GO:0046872">
    <property type="term" value="F:metal ion binding"/>
    <property type="evidence" value="ECO:0007669"/>
    <property type="project" value="UniProtKB-KW"/>
</dbReference>
<dbReference type="GO" id="GO:0008963">
    <property type="term" value="F:phospho-N-acetylmuramoyl-pentapeptide-transferase activity"/>
    <property type="evidence" value="ECO:0007669"/>
    <property type="project" value="UniProtKB-UniRule"/>
</dbReference>
<dbReference type="GO" id="GO:0051992">
    <property type="term" value="F:UDP-N-acetylmuramoyl-L-alanyl-D-glutamyl-meso-2,6-diaminopimelyl-D-alanyl-D-alanine:undecaprenyl-phosphate transferase activity"/>
    <property type="evidence" value="ECO:0007669"/>
    <property type="project" value="RHEA"/>
</dbReference>
<dbReference type="GO" id="GO:0051301">
    <property type="term" value="P:cell division"/>
    <property type="evidence" value="ECO:0007669"/>
    <property type="project" value="UniProtKB-KW"/>
</dbReference>
<dbReference type="GO" id="GO:0071555">
    <property type="term" value="P:cell wall organization"/>
    <property type="evidence" value="ECO:0007669"/>
    <property type="project" value="UniProtKB-KW"/>
</dbReference>
<dbReference type="GO" id="GO:0009252">
    <property type="term" value="P:peptidoglycan biosynthetic process"/>
    <property type="evidence" value="ECO:0007669"/>
    <property type="project" value="UniProtKB-UniRule"/>
</dbReference>
<dbReference type="GO" id="GO:0008360">
    <property type="term" value="P:regulation of cell shape"/>
    <property type="evidence" value="ECO:0007669"/>
    <property type="project" value="UniProtKB-KW"/>
</dbReference>
<dbReference type="CDD" id="cd06852">
    <property type="entry name" value="GT_MraY"/>
    <property type="match status" value="1"/>
</dbReference>
<dbReference type="HAMAP" id="MF_00038">
    <property type="entry name" value="MraY"/>
    <property type="match status" value="1"/>
</dbReference>
<dbReference type="InterPro" id="IPR000715">
    <property type="entry name" value="Glycosyl_transferase_4"/>
</dbReference>
<dbReference type="InterPro" id="IPR003524">
    <property type="entry name" value="PNAcMuramoyl-5peptid_Trfase"/>
</dbReference>
<dbReference type="InterPro" id="IPR018480">
    <property type="entry name" value="PNAcMuramoyl-5peptid_Trfase_CS"/>
</dbReference>
<dbReference type="NCBIfam" id="TIGR00445">
    <property type="entry name" value="mraY"/>
    <property type="match status" value="1"/>
</dbReference>
<dbReference type="PANTHER" id="PTHR22926">
    <property type="entry name" value="PHOSPHO-N-ACETYLMURAMOYL-PENTAPEPTIDE-TRANSFERASE"/>
    <property type="match status" value="1"/>
</dbReference>
<dbReference type="PANTHER" id="PTHR22926:SF5">
    <property type="entry name" value="PHOSPHO-N-ACETYLMURAMOYL-PENTAPEPTIDE-TRANSFERASE HOMOLOG"/>
    <property type="match status" value="1"/>
</dbReference>
<dbReference type="Pfam" id="PF00953">
    <property type="entry name" value="Glycos_transf_4"/>
    <property type="match status" value="1"/>
</dbReference>
<dbReference type="PROSITE" id="PS01348">
    <property type="entry name" value="MRAY_2"/>
    <property type="match status" value="1"/>
</dbReference>
<keyword id="KW-0131">Cell cycle</keyword>
<keyword id="KW-0132">Cell division</keyword>
<keyword id="KW-0997">Cell inner membrane</keyword>
<keyword id="KW-1003">Cell membrane</keyword>
<keyword id="KW-0133">Cell shape</keyword>
<keyword id="KW-0961">Cell wall biogenesis/degradation</keyword>
<keyword id="KW-0460">Magnesium</keyword>
<keyword id="KW-0472">Membrane</keyword>
<keyword id="KW-0479">Metal-binding</keyword>
<keyword id="KW-0573">Peptidoglycan synthesis</keyword>
<keyword id="KW-0808">Transferase</keyword>
<keyword id="KW-0812">Transmembrane</keyword>
<keyword id="KW-1133">Transmembrane helix</keyword>
<reference key="1">
    <citation type="journal article" date="2009" name="PLoS Genet.">
        <title>Adaptations to submarine hydrothermal environments exemplified by the genome of Nautilia profundicola.</title>
        <authorList>
            <person name="Campbell B.J."/>
            <person name="Smith J.L."/>
            <person name="Hanson T.E."/>
            <person name="Klotz M.G."/>
            <person name="Stein L.Y."/>
            <person name="Lee C.K."/>
            <person name="Wu D."/>
            <person name="Robinson J.M."/>
            <person name="Khouri H.M."/>
            <person name="Eisen J.A."/>
            <person name="Cary S.C."/>
        </authorList>
    </citation>
    <scope>NUCLEOTIDE SEQUENCE [LARGE SCALE GENOMIC DNA]</scope>
    <source>
        <strain>ATCC BAA-1463 / DSM 18972 / AmH</strain>
    </source>
</reference>
<accession>B9L7V6</accession>
<gene>
    <name evidence="1" type="primary">mraY</name>
    <name type="ordered locus">NAMH_0291</name>
</gene>
<proteinExistence type="inferred from homology"/>